<accession>Q9BV36</accession>
<accession>B3KSS2</accession>
<accession>B4DKW7</accession>
<accession>G5E9G5</accession>
<accession>Q9HA71</accession>
<sequence>MGKKLDLSKLTDEEAQHVLEVVQRDFDLRRKEEERLEALKGKIKKESSKRELLSDTAHLNETHCARCLQPYQLLVNSKRQCLECGLFTCKSCGRVHPEEQGWICDPCHLARVVKIGSLEWYYEHVKARFKRFGSAKVIRSLHGRLQGGAGPELISEERSGDSDQTDEDGEPGSEAQAQAQPFGSKKKRLLSVHDFDFEGDSDDSTQPQGHSLHLSSVPEARDSPQSLTDESCSEKAAPHKAEGLEEADTGASGCHSHPEEQPTSISPSRHGALAELCPPGGSHRMALGTAAALGSNVIRNEQLPLQYLADVDTSDEESIRAHVMASHHSKRRGRASSESQIFELNKHISAVECLLTYLENTVVPPLAKGLGAGVRTEADVEEEALRRKLEELTSNVSDQETSSEEEEAKDEKAEPNRDKSVGPLPQADPEVGTAAHQTNRQEKSPQDPGDPVQYNRTTDEELSELEDRVAVTASEVQQAESEVSDIESRIAALRAAGLTVKPSGKPRRKSNLPIFLPRVAGKLGKRPEDPNADPSSEAKAMAVPYLLRRKFSNSLKSQGKDDDSFDRKSVYRGSLTQRNPNARKGMASHTFAKPVVAHQS</sequence>
<evidence type="ECO:0000255" key="1"/>
<evidence type="ECO:0000255" key="2">
    <source>
        <dbReference type="PROSITE-ProRule" id="PRU00234"/>
    </source>
</evidence>
<evidence type="ECO:0000256" key="3">
    <source>
        <dbReference type="SAM" id="MobiDB-lite"/>
    </source>
</evidence>
<evidence type="ECO:0000269" key="4">
    <source>
    </source>
</evidence>
<evidence type="ECO:0000269" key="5">
    <source>
    </source>
</evidence>
<evidence type="ECO:0000269" key="6">
    <source>
    </source>
</evidence>
<evidence type="ECO:0000303" key="7">
    <source>
    </source>
</evidence>
<evidence type="ECO:0000303" key="8">
    <source>
    </source>
</evidence>
<evidence type="ECO:0000305" key="9"/>
<dbReference type="EMBL" id="AK022207">
    <property type="protein sequence ID" value="BAB13984.1"/>
    <property type="molecule type" value="mRNA"/>
</dbReference>
<dbReference type="EMBL" id="AK094168">
    <property type="protein sequence ID" value="BAG52834.1"/>
    <property type="molecule type" value="mRNA"/>
</dbReference>
<dbReference type="EMBL" id="AK296745">
    <property type="protein sequence ID" value="BAG59329.1"/>
    <property type="molecule type" value="mRNA"/>
</dbReference>
<dbReference type="EMBL" id="AK225381">
    <property type="status" value="NOT_ANNOTATED_CDS"/>
    <property type="molecule type" value="mRNA"/>
</dbReference>
<dbReference type="EMBL" id="AC104667">
    <property type="status" value="NOT_ANNOTATED_CDS"/>
    <property type="molecule type" value="Genomic_DNA"/>
</dbReference>
<dbReference type="EMBL" id="AC112721">
    <property type="status" value="NOT_ANNOTATED_CDS"/>
    <property type="molecule type" value="Genomic_DNA"/>
</dbReference>
<dbReference type="EMBL" id="CH471063">
    <property type="protein sequence ID" value="EAW71112.1"/>
    <property type="molecule type" value="Genomic_DNA"/>
</dbReference>
<dbReference type="EMBL" id="BC001653">
    <property type="protein sequence ID" value="AAH01653.1"/>
    <property type="molecule type" value="mRNA"/>
</dbReference>
<dbReference type="EMBL" id="BC051269">
    <property type="protein sequence ID" value="AAH51269.1"/>
    <property type="molecule type" value="mRNA"/>
</dbReference>
<dbReference type="CCDS" id="CCDS2518.1">
    <molecule id="Q9BV36-1"/>
</dbReference>
<dbReference type="CCDS" id="CCDS42836.1">
    <molecule id="Q9BV36-2"/>
</dbReference>
<dbReference type="CCDS" id="CCDS63172.1">
    <molecule id="Q9BV36-5"/>
</dbReference>
<dbReference type="CCDS" id="CCDS63173.1">
    <molecule id="Q9BV36-3"/>
</dbReference>
<dbReference type="RefSeq" id="NP_001035932.1">
    <molecule id="Q9BV36-2"/>
    <property type="nucleotide sequence ID" value="NM_001042467.3"/>
</dbReference>
<dbReference type="RefSeq" id="NP_001268402.1">
    <molecule id="Q9BV36-3"/>
    <property type="nucleotide sequence ID" value="NM_001281473.2"/>
</dbReference>
<dbReference type="RefSeq" id="NP_001268403.1">
    <molecule id="Q9BV36-5"/>
    <property type="nucleotide sequence ID" value="NM_001281474.2"/>
</dbReference>
<dbReference type="RefSeq" id="NP_077006.1">
    <molecule id="Q9BV36-1"/>
    <property type="nucleotide sequence ID" value="NM_024101.7"/>
</dbReference>
<dbReference type="RefSeq" id="XP_047301763.1">
    <molecule id="Q9BV36-4"/>
    <property type="nucleotide sequence ID" value="XM_047445807.1"/>
</dbReference>
<dbReference type="RefSeq" id="XP_054199829.1">
    <molecule id="Q9BV36-4"/>
    <property type="nucleotide sequence ID" value="XM_054343854.1"/>
</dbReference>
<dbReference type="SMR" id="Q9BV36"/>
<dbReference type="BioGRID" id="122531">
    <property type="interactions" value="21"/>
</dbReference>
<dbReference type="DIP" id="DIP-44046N"/>
<dbReference type="FunCoup" id="Q9BV36">
    <property type="interactions" value="19"/>
</dbReference>
<dbReference type="IntAct" id="Q9BV36">
    <property type="interactions" value="18"/>
</dbReference>
<dbReference type="MINT" id="Q9BV36"/>
<dbReference type="STRING" id="9606.ENSP00000264605"/>
<dbReference type="GlyGen" id="Q9BV36">
    <property type="glycosylation" value="2 sites"/>
</dbReference>
<dbReference type="iPTMnet" id="Q9BV36"/>
<dbReference type="PhosphoSitePlus" id="Q9BV36"/>
<dbReference type="BioMuta" id="MLPH"/>
<dbReference type="DMDM" id="32129730"/>
<dbReference type="jPOST" id="Q9BV36"/>
<dbReference type="MassIVE" id="Q9BV36"/>
<dbReference type="PaxDb" id="9606-ENSP00000264605"/>
<dbReference type="PeptideAtlas" id="Q9BV36"/>
<dbReference type="ProteomicsDB" id="33931"/>
<dbReference type="ProteomicsDB" id="4492"/>
<dbReference type="ProteomicsDB" id="79162">
    <molecule id="Q9BV36-1"/>
</dbReference>
<dbReference type="ProteomicsDB" id="79163">
    <molecule id="Q9BV36-2"/>
</dbReference>
<dbReference type="ProteomicsDB" id="79164">
    <molecule id="Q9BV36-3"/>
</dbReference>
<dbReference type="ABCD" id="Q9BV36">
    <property type="antibodies" value="3 sequenced antibodies"/>
</dbReference>
<dbReference type="Antibodypedia" id="20264">
    <property type="antibodies" value="249 antibodies from 28 providers"/>
</dbReference>
<dbReference type="DNASU" id="79083"/>
<dbReference type="Ensembl" id="ENST00000264605.8">
    <molecule id="Q9BV36-1"/>
    <property type="protein sequence ID" value="ENSP00000264605.3"/>
    <property type="gene ID" value="ENSG00000115648.14"/>
</dbReference>
<dbReference type="Ensembl" id="ENST00000338530.8">
    <molecule id="Q9BV36-2"/>
    <property type="protein sequence ID" value="ENSP00000341845.4"/>
    <property type="gene ID" value="ENSG00000115648.14"/>
</dbReference>
<dbReference type="Ensembl" id="ENST00000409373.5">
    <molecule id="Q9BV36-3"/>
    <property type="protein sequence ID" value="ENSP00000386780.1"/>
    <property type="gene ID" value="ENSG00000115648.14"/>
</dbReference>
<dbReference type="Ensembl" id="ENST00000410032.5">
    <molecule id="Q9BV36-5"/>
    <property type="protein sequence ID" value="ENSP00000386338.1"/>
    <property type="gene ID" value="ENSG00000115648.14"/>
</dbReference>
<dbReference type="GeneID" id="79083"/>
<dbReference type="KEGG" id="hsa:79083"/>
<dbReference type="MANE-Select" id="ENST00000264605.8">
    <property type="protein sequence ID" value="ENSP00000264605.3"/>
    <property type="RefSeq nucleotide sequence ID" value="NM_024101.7"/>
    <property type="RefSeq protein sequence ID" value="NP_077006.1"/>
</dbReference>
<dbReference type="UCSC" id="uc002vws.4">
    <molecule id="Q9BV36-1"/>
    <property type="organism name" value="human"/>
</dbReference>
<dbReference type="AGR" id="HGNC:29643"/>
<dbReference type="CTD" id="79083"/>
<dbReference type="DisGeNET" id="79083"/>
<dbReference type="GeneCards" id="MLPH"/>
<dbReference type="HGNC" id="HGNC:29643">
    <property type="gene designation" value="MLPH"/>
</dbReference>
<dbReference type="HPA" id="ENSG00000115648">
    <property type="expression patterns" value="Tissue enhanced (prostate, salivary gland)"/>
</dbReference>
<dbReference type="MalaCards" id="MLPH"/>
<dbReference type="MIM" id="606526">
    <property type="type" value="gene"/>
</dbReference>
<dbReference type="MIM" id="609227">
    <property type="type" value="phenotype"/>
</dbReference>
<dbReference type="neXtProt" id="NX_Q9BV36"/>
<dbReference type="OpenTargets" id="ENSG00000115648"/>
<dbReference type="Orphanet" id="79478">
    <property type="disease" value="Griscelli syndrome type 3"/>
</dbReference>
<dbReference type="PharmGKB" id="PA134899891"/>
<dbReference type="VEuPathDB" id="HostDB:ENSG00000115648"/>
<dbReference type="eggNOG" id="ENOG502RJPZ">
    <property type="taxonomic scope" value="Eukaryota"/>
</dbReference>
<dbReference type="GeneTree" id="ENSGT00950000183138"/>
<dbReference type="HOGENOM" id="CLU_025193_2_0_1"/>
<dbReference type="InParanoid" id="Q9BV36"/>
<dbReference type="OMA" id="EAQGWLC"/>
<dbReference type="OrthoDB" id="10072397at2759"/>
<dbReference type="PAN-GO" id="Q9BV36">
    <property type="GO annotations" value="3 GO annotations based on evolutionary models"/>
</dbReference>
<dbReference type="PhylomeDB" id="Q9BV36"/>
<dbReference type="TreeFam" id="TF331599"/>
<dbReference type="PathwayCommons" id="Q9BV36"/>
<dbReference type="Reactome" id="R-HSA-9824585">
    <property type="pathway name" value="Regulation of MITF-M-dependent genes involved in pigmentation"/>
</dbReference>
<dbReference type="SignaLink" id="Q9BV36"/>
<dbReference type="BioGRID-ORCS" id="79083">
    <property type="hits" value="9 hits in 1147 CRISPR screens"/>
</dbReference>
<dbReference type="ChiTaRS" id="MLPH">
    <property type="organism name" value="human"/>
</dbReference>
<dbReference type="GeneWiki" id="Melanophilin"/>
<dbReference type="GenomeRNAi" id="79083"/>
<dbReference type="Pharos" id="Q9BV36">
    <property type="development level" value="Tbio"/>
</dbReference>
<dbReference type="PRO" id="PR:Q9BV36"/>
<dbReference type="Proteomes" id="UP000005640">
    <property type="component" value="Chromosome 2"/>
</dbReference>
<dbReference type="RNAct" id="Q9BV36">
    <property type="molecule type" value="protein"/>
</dbReference>
<dbReference type="Bgee" id="ENSG00000115648">
    <property type="expression patterns" value="Expressed in pancreatic ductal cell and 157 other cell types or tissues"/>
</dbReference>
<dbReference type="ExpressionAtlas" id="Q9BV36">
    <property type="expression patterns" value="baseline and differential"/>
</dbReference>
<dbReference type="GO" id="GO:0030864">
    <property type="term" value="C:cortical actin cytoskeleton"/>
    <property type="evidence" value="ECO:0000318"/>
    <property type="project" value="GO_Central"/>
</dbReference>
<dbReference type="GO" id="GO:0005829">
    <property type="term" value="C:cytosol"/>
    <property type="evidence" value="ECO:0000304"/>
    <property type="project" value="Reactome"/>
</dbReference>
<dbReference type="GO" id="GO:0030425">
    <property type="term" value="C:dendrite"/>
    <property type="evidence" value="ECO:0000314"/>
    <property type="project" value="UniProtKB"/>
</dbReference>
<dbReference type="GO" id="GO:0070062">
    <property type="term" value="C:extracellular exosome"/>
    <property type="evidence" value="ECO:0007005"/>
    <property type="project" value="UniProtKB"/>
</dbReference>
<dbReference type="GO" id="GO:0048471">
    <property type="term" value="C:perinuclear region of cytoplasm"/>
    <property type="evidence" value="ECO:0000314"/>
    <property type="project" value="UniProtKB"/>
</dbReference>
<dbReference type="GO" id="GO:0003779">
    <property type="term" value="F:actin binding"/>
    <property type="evidence" value="ECO:0000318"/>
    <property type="project" value="GO_Central"/>
</dbReference>
<dbReference type="GO" id="GO:0017022">
    <property type="term" value="F:myosin binding"/>
    <property type="evidence" value="ECO:0000353"/>
    <property type="project" value="UniProtKB"/>
</dbReference>
<dbReference type="GO" id="GO:0030674">
    <property type="term" value="F:protein-macromolecule adaptor activity"/>
    <property type="evidence" value="ECO:0000353"/>
    <property type="project" value="UniProtKB"/>
</dbReference>
<dbReference type="GO" id="GO:0031267">
    <property type="term" value="F:small GTPase binding"/>
    <property type="evidence" value="ECO:0000353"/>
    <property type="project" value="UniProtKB"/>
</dbReference>
<dbReference type="GO" id="GO:0008270">
    <property type="term" value="F:zinc ion binding"/>
    <property type="evidence" value="ECO:0007669"/>
    <property type="project" value="UniProtKB-KW"/>
</dbReference>
<dbReference type="GO" id="GO:0006886">
    <property type="term" value="P:intracellular protein transport"/>
    <property type="evidence" value="ECO:0007669"/>
    <property type="project" value="InterPro"/>
</dbReference>
<dbReference type="GO" id="GO:0032402">
    <property type="term" value="P:melanosome transport"/>
    <property type="evidence" value="ECO:0000303"/>
    <property type="project" value="UniProtKB"/>
</dbReference>
<dbReference type="CDD" id="cd15752">
    <property type="entry name" value="FYVE_SlaC2-a"/>
    <property type="match status" value="1"/>
</dbReference>
<dbReference type="FunFam" id="3.30.40.10:FF:000018">
    <property type="entry name" value="Synaptotagmin-like 5, isoform CRA_a"/>
    <property type="match status" value="1"/>
</dbReference>
<dbReference type="Gene3D" id="3.30.40.10">
    <property type="entry name" value="Zinc/RING finger domain, C3HC4 (zinc finger)"/>
    <property type="match status" value="1"/>
</dbReference>
<dbReference type="InterPro" id="IPR041282">
    <property type="entry name" value="FYVE_2"/>
</dbReference>
<dbReference type="InterPro" id="IPR051745">
    <property type="entry name" value="Intracell_Transport_Effector"/>
</dbReference>
<dbReference type="InterPro" id="IPR037442">
    <property type="entry name" value="Melanophilin_FYVE-rel_dom"/>
</dbReference>
<dbReference type="InterPro" id="IPR006788">
    <property type="entry name" value="Myrip/Melanophilin"/>
</dbReference>
<dbReference type="InterPro" id="IPR010911">
    <property type="entry name" value="Rab_BD"/>
</dbReference>
<dbReference type="InterPro" id="IPR011011">
    <property type="entry name" value="Znf_FYVE_PHD"/>
</dbReference>
<dbReference type="InterPro" id="IPR013083">
    <property type="entry name" value="Znf_RING/FYVE/PHD"/>
</dbReference>
<dbReference type="PANTHER" id="PTHR14555:SF1">
    <property type="entry name" value="MELANOPHILIN"/>
    <property type="match status" value="1"/>
</dbReference>
<dbReference type="PANTHER" id="PTHR14555">
    <property type="entry name" value="MYELIN-ASSOCIATED OLIGODENDROCYTIC BASIC PROTEIN MOBP -RELATED"/>
    <property type="match status" value="1"/>
</dbReference>
<dbReference type="Pfam" id="PF02318">
    <property type="entry name" value="FYVE_2"/>
    <property type="match status" value="1"/>
</dbReference>
<dbReference type="Pfam" id="PF04698">
    <property type="entry name" value="Rab_eff_C"/>
    <property type="match status" value="1"/>
</dbReference>
<dbReference type="SUPFAM" id="SSF57903">
    <property type="entry name" value="FYVE/PHD zinc finger"/>
    <property type="match status" value="1"/>
</dbReference>
<dbReference type="PROSITE" id="PS50916">
    <property type="entry name" value="RABBD"/>
    <property type="match status" value="1"/>
</dbReference>
<gene>
    <name type="primary">MLPH</name>
    <name type="synonym">SLAC2A</name>
</gene>
<comment type="function">
    <text evidence="4">Rab effector protein involved in melanosome transport. Serves as link between melanosome-bound RAB27A and the motor protein MYO5A.</text>
</comment>
<comment type="subunit">
    <text>Binds RAB27A that has been activated by GTP-binding via its N-terminus. Binds MYO5A via its C-terminal coiled coil domain.</text>
</comment>
<comment type="interaction">
    <interactant intactId="EBI-7042162">
        <id>Q9BV36</id>
    </interactant>
    <interactant intactId="EBI-465781">
        <id>Q9UL45</id>
        <label>BLOC1S6</label>
    </interactant>
    <organismsDiffer>false</organismsDiffer>
    <experiments>3</experiments>
</comment>
<comment type="interaction">
    <interactant intactId="EBI-7042162">
        <id>Q9BV36</id>
    </interactant>
    <interactant intactId="EBI-747505">
        <id>Q8TAB5</id>
        <label>C1orf216</label>
    </interactant>
    <organismsDiffer>false</organismsDiffer>
    <experiments>3</experiments>
</comment>
<comment type="interaction">
    <interactant intactId="EBI-7042162">
        <id>Q9BV36</id>
    </interactant>
    <interactant intactId="EBI-716881">
        <id>P51159</id>
        <label>RAB27A</label>
    </interactant>
    <organismsDiffer>false</organismsDiffer>
    <experiments>6</experiments>
</comment>
<comment type="interaction">
    <interactant intactId="EBI-7042162">
        <id>Q9BV36</id>
    </interactant>
    <interactant intactId="EBI-15528760">
        <id>P51159-1</id>
        <label>RAB27A</label>
    </interactant>
    <organismsDiffer>false</organismsDiffer>
    <experiments>2</experiments>
</comment>
<comment type="interaction">
    <interactant intactId="EBI-7042162">
        <id>Q9BV36</id>
    </interactant>
    <interactant intactId="EBI-10179046">
        <id>O00194</id>
        <label>RAB27B</label>
    </interactant>
    <organismsDiffer>false</organismsDiffer>
    <experiments>4</experiments>
</comment>
<comment type="interaction">
    <interactant intactId="EBI-7042162">
        <id>Q9BV36</id>
    </interactant>
    <interactant intactId="EBI-10253121">
        <id>Q6P9E2</id>
        <label>RECK</label>
    </interactant>
    <organismsDiffer>false</organismsDiffer>
    <experiments>3</experiments>
</comment>
<comment type="subcellular location">
    <subcellularLocation>
        <location>Cytoplasm</location>
    </subcellularLocation>
</comment>
<comment type="alternative products">
    <event type="alternative splicing"/>
    <isoform>
        <id>Q9BV36-1</id>
        <name>1</name>
        <sequence type="displayed"/>
    </isoform>
    <isoform>
        <id>Q9BV36-2</id>
        <name>2</name>
        <sequence type="described" ref="VSP_007554"/>
    </isoform>
    <isoform>
        <id>Q9BV36-3</id>
        <name>3</name>
        <sequence type="described" ref="VSP_042158 VSP_007554 VSP_042159"/>
    </isoform>
    <isoform>
        <id>Q9BV36-4</id>
        <name>4</name>
        <sequence type="described" ref="VSP_054367 VSP_054368"/>
    </isoform>
    <isoform>
        <id>Q9BV36-5</id>
        <name>5</name>
        <sequence type="described" ref="VSP_055730"/>
    </isoform>
</comment>
<comment type="disease" evidence="5">
    <disease id="DI-01688">
        <name>Griscelli syndrome 3</name>
        <acronym>GS3</acronym>
        <description>Rare autosomal recessive disorder characterized by pigmentary dilution of the skin and hair, the presence of large clumps of pigment in hair shafts, and an accumulation of melanosomes in melanocytes, without other clinical manifestations.</description>
        <dbReference type="MIM" id="609227"/>
    </disease>
    <text>The disease is caused by variants affecting the gene represented in this entry.</text>
</comment>
<comment type="online information" name="MLPHbase">
    <link uri="https://databases.lovd.nl/shared/genes/MLPH"/>
    <text>MLPH mutation db</text>
</comment>
<organism>
    <name type="scientific">Homo sapiens</name>
    <name type="common">Human</name>
    <dbReference type="NCBI Taxonomy" id="9606"/>
    <lineage>
        <taxon>Eukaryota</taxon>
        <taxon>Metazoa</taxon>
        <taxon>Chordata</taxon>
        <taxon>Craniata</taxon>
        <taxon>Vertebrata</taxon>
        <taxon>Euteleostomi</taxon>
        <taxon>Mammalia</taxon>
        <taxon>Eutheria</taxon>
        <taxon>Euarchontoglires</taxon>
        <taxon>Primates</taxon>
        <taxon>Haplorrhini</taxon>
        <taxon>Catarrhini</taxon>
        <taxon>Hominidae</taxon>
        <taxon>Homo</taxon>
    </lineage>
</organism>
<feature type="chain" id="PRO_0000190222" description="Melanophilin">
    <location>
        <begin position="1"/>
        <end position="600"/>
    </location>
</feature>
<feature type="domain" description="RabBD" evidence="2">
    <location>
        <begin position="4"/>
        <end position="124"/>
    </location>
</feature>
<feature type="zinc finger region" description="FYVE-type">
    <location>
        <begin position="64"/>
        <end position="107"/>
    </location>
</feature>
<feature type="region of interest" description="Disordered" evidence="3">
    <location>
        <begin position="146"/>
        <end position="277"/>
    </location>
</feature>
<feature type="region of interest" description="Disordered" evidence="3">
    <location>
        <begin position="390"/>
        <end position="465"/>
    </location>
</feature>
<feature type="region of interest" description="Disordered" evidence="3">
    <location>
        <begin position="499"/>
        <end position="541"/>
    </location>
</feature>
<feature type="region of interest" description="Disordered" evidence="3">
    <location>
        <begin position="553"/>
        <end position="600"/>
    </location>
</feature>
<feature type="coiled-coil region" evidence="1">
    <location>
        <begin position="373"/>
        <end position="496"/>
    </location>
</feature>
<feature type="compositionally biased region" description="Basic and acidic residues" evidence="3">
    <location>
        <begin position="232"/>
        <end position="243"/>
    </location>
</feature>
<feature type="compositionally biased region" description="Basic and acidic residues" evidence="3">
    <location>
        <begin position="409"/>
        <end position="420"/>
    </location>
</feature>
<feature type="compositionally biased region" description="Basic and acidic residues" evidence="3">
    <location>
        <begin position="558"/>
        <end position="569"/>
    </location>
</feature>
<feature type="splice variant" id="VSP_042158" description="In isoform 3." evidence="7">
    <location>
        <begin position="186"/>
        <end position="225"/>
    </location>
</feature>
<feature type="splice variant" id="VSP_055730" description="In isoform 5." evidence="7">
    <location>
        <begin position="226"/>
        <end position="368"/>
    </location>
</feature>
<feature type="splice variant" id="VSP_007554" description="In isoform 2 and isoform 3." evidence="7 8">
    <location>
        <begin position="341"/>
        <end position="368"/>
    </location>
</feature>
<feature type="splice variant" id="VSP_042159" description="In isoform 3." evidence="7">
    <location>
        <begin position="430"/>
        <end position="481"/>
    </location>
</feature>
<feature type="splice variant" id="VSP_054367" description="In isoform 4." evidence="7">
    <original>IFLPRVAGKLGKRPEDPNADPSSEAKAMAVPYLLRRKF</original>
    <variation>ALYEGTLSLCSEDLKHTHPDSVKSKRSRLNHVASCGNP</variation>
    <location>
        <begin position="514"/>
        <end position="551"/>
    </location>
</feature>
<feature type="splice variant" id="VSP_054368" description="In isoform 4." evidence="7">
    <location>
        <begin position="552"/>
        <end position="600"/>
    </location>
</feature>
<feature type="sequence variant" id="VAR_018724" description="In GS3; abolishes RAB27A binding; dbSNP:rs119473031." evidence="5">
    <original>R</original>
    <variation>W</variation>
    <location>
        <position position="35"/>
    </location>
</feature>
<feature type="sequence variant" id="VAR_015690" description="In dbSNP:rs2292880.">
    <original>R</original>
    <variation>W</variation>
    <location>
        <position position="139"/>
    </location>
</feature>
<feature type="sequence variant" id="VAR_015691" description="In dbSNP:rs3751109.">
    <original>L</original>
    <variation>P</variation>
    <location>
        <position position="153"/>
    </location>
</feature>
<feature type="sequence variant" id="VAR_015692" description="In dbSNP:rs3751108.">
    <original>D</original>
    <variation>N</variation>
    <location>
        <position position="163"/>
    </location>
</feature>
<feature type="sequence variant" id="VAR_015693" description="In dbSNP:rs3751107.">
    <original>G</original>
    <variation>D</variation>
    <location>
        <position position="172"/>
    </location>
</feature>
<feature type="sequence variant" id="VAR_038410" description="In dbSNP:rs11883500.">
    <original>T</original>
    <variation>I</variation>
    <location>
        <position position="289"/>
    </location>
</feature>
<feature type="sequence variant" id="VAR_015694" description="In dbSNP:rs2292884.">
    <original>H</original>
    <variation>R</variation>
    <location>
        <position position="347"/>
    </location>
</feature>
<feature type="sequence variant" id="VAR_015695" description="In dbSNP:rs3817362." evidence="6">
    <original>V</original>
    <variation>A</variation>
    <location>
        <position position="374"/>
    </location>
</feature>
<feature type="sequence variant" id="VAR_061754" description="In dbSNP:rs58256353." evidence="6">
    <original>P</original>
    <variation>S</variation>
    <location>
        <position position="451"/>
    </location>
</feature>
<feature type="mutagenesis site" description="Abolishes RAB27A binding." evidence="4">
    <original>E</original>
    <variation>A</variation>
    <location>
        <position position="14"/>
    </location>
</feature>
<feature type="mutagenesis site" description="Decreases RAB27A binding." evidence="4">
    <original>R</original>
    <variation>A</variation>
    <location>
        <position position="24"/>
    </location>
</feature>
<feature type="mutagenesis site" description="Abolishes RAB27A binding." evidence="4">
    <original>E</original>
    <variation>A</variation>
    <location>
        <position position="32"/>
    </location>
</feature>
<feature type="sequence conflict" description="In Ref. 1; BAB13984." evidence="9" ref="1">
    <original>L</original>
    <variation>P</variation>
    <location>
        <position position="109"/>
    </location>
</feature>
<feature type="sequence conflict" description="In Ref. 1; BAG52834." evidence="9" ref="1">
    <original>G</original>
    <variation>R</variation>
    <location>
        <position position="143"/>
    </location>
</feature>
<feature type="sequence conflict" description="In Ref. 1; AK225381." evidence="9" ref="1">
    <original>G</original>
    <variation>R</variation>
    <location>
        <position position="253"/>
    </location>
</feature>
<feature type="sequence conflict" description="In Ref. 1; BAB13984." evidence="9" ref="1">
    <original>Q</original>
    <variation>R</variation>
    <location>
        <position position="577"/>
    </location>
</feature>
<name>MELPH_HUMAN</name>
<reference key="1">
    <citation type="journal article" date="2004" name="Nat. Genet.">
        <title>Complete sequencing and characterization of 21,243 full-length human cDNAs.</title>
        <authorList>
            <person name="Ota T."/>
            <person name="Suzuki Y."/>
            <person name="Nishikawa T."/>
            <person name="Otsuki T."/>
            <person name="Sugiyama T."/>
            <person name="Irie R."/>
            <person name="Wakamatsu A."/>
            <person name="Hayashi K."/>
            <person name="Sato H."/>
            <person name="Nagai K."/>
            <person name="Kimura K."/>
            <person name="Makita H."/>
            <person name="Sekine M."/>
            <person name="Obayashi M."/>
            <person name="Nishi T."/>
            <person name="Shibahara T."/>
            <person name="Tanaka T."/>
            <person name="Ishii S."/>
            <person name="Yamamoto J."/>
            <person name="Saito K."/>
            <person name="Kawai Y."/>
            <person name="Isono Y."/>
            <person name="Nakamura Y."/>
            <person name="Nagahari K."/>
            <person name="Murakami K."/>
            <person name="Yasuda T."/>
            <person name="Iwayanagi T."/>
            <person name="Wagatsuma M."/>
            <person name="Shiratori A."/>
            <person name="Sudo H."/>
            <person name="Hosoiri T."/>
            <person name="Kaku Y."/>
            <person name="Kodaira H."/>
            <person name="Kondo H."/>
            <person name="Sugawara M."/>
            <person name="Takahashi M."/>
            <person name="Kanda K."/>
            <person name="Yokoi T."/>
            <person name="Furuya T."/>
            <person name="Kikkawa E."/>
            <person name="Omura Y."/>
            <person name="Abe K."/>
            <person name="Kamihara K."/>
            <person name="Katsuta N."/>
            <person name="Sato K."/>
            <person name="Tanikawa M."/>
            <person name="Yamazaki M."/>
            <person name="Ninomiya K."/>
            <person name="Ishibashi T."/>
            <person name="Yamashita H."/>
            <person name="Murakawa K."/>
            <person name="Fujimori K."/>
            <person name="Tanai H."/>
            <person name="Kimata M."/>
            <person name="Watanabe M."/>
            <person name="Hiraoka S."/>
            <person name="Chiba Y."/>
            <person name="Ishida S."/>
            <person name="Ono Y."/>
            <person name="Takiguchi S."/>
            <person name="Watanabe S."/>
            <person name="Yosida M."/>
            <person name="Hotuta T."/>
            <person name="Kusano J."/>
            <person name="Kanehori K."/>
            <person name="Takahashi-Fujii A."/>
            <person name="Hara H."/>
            <person name="Tanase T.-O."/>
            <person name="Nomura Y."/>
            <person name="Togiya S."/>
            <person name="Komai F."/>
            <person name="Hara R."/>
            <person name="Takeuchi K."/>
            <person name="Arita M."/>
            <person name="Imose N."/>
            <person name="Musashino K."/>
            <person name="Yuuki H."/>
            <person name="Oshima A."/>
            <person name="Sasaki N."/>
            <person name="Aotsuka S."/>
            <person name="Yoshikawa Y."/>
            <person name="Matsunawa H."/>
            <person name="Ichihara T."/>
            <person name="Shiohata N."/>
            <person name="Sano S."/>
            <person name="Moriya S."/>
            <person name="Momiyama H."/>
            <person name="Satoh N."/>
            <person name="Takami S."/>
            <person name="Terashima Y."/>
            <person name="Suzuki O."/>
            <person name="Nakagawa S."/>
            <person name="Senoh A."/>
            <person name="Mizoguchi H."/>
            <person name="Goto Y."/>
            <person name="Shimizu F."/>
            <person name="Wakebe H."/>
            <person name="Hishigaki H."/>
            <person name="Watanabe T."/>
            <person name="Sugiyama A."/>
            <person name="Takemoto M."/>
            <person name="Kawakami B."/>
            <person name="Yamazaki M."/>
            <person name="Watanabe K."/>
            <person name="Kumagai A."/>
            <person name="Itakura S."/>
            <person name="Fukuzumi Y."/>
            <person name="Fujimori Y."/>
            <person name="Komiyama M."/>
            <person name="Tashiro H."/>
            <person name="Tanigami A."/>
            <person name="Fujiwara T."/>
            <person name="Ono T."/>
            <person name="Yamada K."/>
            <person name="Fujii Y."/>
            <person name="Ozaki K."/>
            <person name="Hirao M."/>
            <person name="Ohmori Y."/>
            <person name="Kawabata A."/>
            <person name="Hikiji T."/>
            <person name="Kobatake N."/>
            <person name="Inagaki H."/>
            <person name="Ikema Y."/>
            <person name="Okamoto S."/>
            <person name="Okitani R."/>
            <person name="Kawakami T."/>
            <person name="Noguchi S."/>
            <person name="Itoh T."/>
            <person name="Shigeta K."/>
            <person name="Senba T."/>
            <person name="Matsumura K."/>
            <person name="Nakajima Y."/>
            <person name="Mizuno T."/>
            <person name="Morinaga M."/>
            <person name="Sasaki M."/>
            <person name="Togashi T."/>
            <person name="Oyama M."/>
            <person name="Hata H."/>
            <person name="Watanabe M."/>
            <person name="Komatsu T."/>
            <person name="Mizushima-Sugano J."/>
            <person name="Satoh T."/>
            <person name="Shirai Y."/>
            <person name="Takahashi Y."/>
            <person name="Nakagawa K."/>
            <person name="Okumura K."/>
            <person name="Nagase T."/>
            <person name="Nomura N."/>
            <person name="Kikuchi H."/>
            <person name="Masuho Y."/>
            <person name="Yamashita R."/>
            <person name="Nakai K."/>
            <person name="Yada T."/>
            <person name="Nakamura Y."/>
            <person name="Ohara O."/>
            <person name="Isogai T."/>
            <person name="Sugano S."/>
        </authorList>
    </citation>
    <scope>NUCLEOTIDE SEQUENCE [LARGE SCALE MRNA] (ISOFORMS 2; 3; 4 AND 5)</scope>
    <scope>VARIANTS ALA-374 AND SER-451</scope>
    <source>
        <tissue>Kidney</tissue>
        <tissue>Mammary gland</tissue>
        <tissue>Tongue</tissue>
    </source>
</reference>
<reference key="2">
    <citation type="journal article" date="2005" name="Nature">
        <title>Generation and annotation of the DNA sequences of human chromosomes 2 and 4.</title>
        <authorList>
            <person name="Hillier L.W."/>
            <person name="Graves T.A."/>
            <person name="Fulton R.S."/>
            <person name="Fulton L.A."/>
            <person name="Pepin K.H."/>
            <person name="Minx P."/>
            <person name="Wagner-McPherson C."/>
            <person name="Layman D."/>
            <person name="Wylie K."/>
            <person name="Sekhon M."/>
            <person name="Becker M.C."/>
            <person name="Fewell G.A."/>
            <person name="Delehaunty K.D."/>
            <person name="Miner T.L."/>
            <person name="Nash W.E."/>
            <person name="Kremitzki C."/>
            <person name="Oddy L."/>
            <person name="Du H."/>
            <person name="Sun H."/>
            <person name="Bradshaw-Cordum H."/>
            <person name="Ali J."/>
            <person name="Carter J."/>
            <person name="Cordes M."/>
            <person name="Harris A."/>
            <person name="Isak A."/>
            <person name="van Brunt A."/>
            <person name="Nguyen C."/>
            <person name="Du F."/>
            <person name="Courtney L."/>
            <person name="Kalicki J."/>
            <person name="Ozersky P."/>
            <person name="Abbott S."/>
            <person name="Armstrong J."/>
            <person name="Belter E.A."/>
            <person name="Caruso L."/>
            <person name="Cedroni M."/>
            <person name="Cotton M."/>
            <person name="Davidson T."/>
            <person name="Desai A."/>
            <person name="Elliott G."/>
            <person name="Erb T."/>
            <person name="Fronick C."/>
            <person name="Gaige T."/>
            <person name="Haakenson W."/>
            <person name="Haglund K."/>
            <person name="Holmes A."/>
            <person name="Harkins R."/>
            <person name="Kim K."/>
            <person name="Kruchowski S.S."/>
            <person name="Strong C.M."/>
            <person name="Grewal N."/>
            <person name="Goyea E."/>
            <person name="Hou S."/>
            <person name="Levy A."/>
            <person name="Martinka S."/>
            <person name="Mead K."/>
            <person name="McLellan M.D."/>
            <person name="Meyer R."/>
            <person name="Randall-Maher J."/>
            <person name="Tomlinson C."/>
            <person name="Dauphin-Kohlberg S."/>
            <person name="Kozlowicz-Reilly A."/>
            <person name="Shah N."/>
            <person name="Swearengen-Shahid S."/>
            <person name="Snider J."/>
            <person name="Strong J.T."/>
            <person name="Thompson J."/>
            <person name="Yoakum M."/>
            <person name="Leonard S."/>
            <person name="Pearman C."/>
            <person name="Trani L."/>
            <person name="Radionenko M."/>
            <person name="Waligorski J.E."/>
            <person name="Wang C."/>
            <person name="Rock S.M."/>
            <person name="Tin-Wollam A.-M."/>
            <person name="Maupin R."/>
            <person name="Latreille P."/>
            <person name="Wendl M.C."/>
            <person name="Yang S.-P."/>
            <person name="Pohl C."/>
            <person name="Wallis J.W."/>
            <person name="Spieth J."/>
            <person name="Bieri T.A."/>
            <person name="Berkowicz N."/>
            <person name="Nelson J.O."/>
            <person name="Osborne J."/>
            <person name="Ding L."/>
            <person name="Meyer R."/>
            <person name="Sabo A."/>
            <person name="Shotland Y."/>
            <person name="Sinha P."/>
            <person name="Wohldmann P.E."/>
            <person name="Cook L.L."/>
            <person name="Hickenbotham M.T."/>
            <person name="Eldred J."/>
            <person name="Williams D."/>
            <person name="Jones T.A."/>
            <person name="She X."/>
            <person name="Ciccarelli F.D."/>
            <person name="Izaurralde E."/>
            <person name="Taylor J."/>
            <person name="Schmutz J."/>
            <person name="Myers R.M."/>
            <person name="Cox D.R."/>
            <person name="Huang X."/>
            <person name="McPherson J.D."/>
            <person name="Mardis E.R."/>
            <person name="Clifton S.W."/>
            <person name="Warren W.C."/>
            <person name="Chinwalla A.T."/>
            <person name="Eddy S.R."/>
            <person name="Marra M.A."/>
            <person name="Ovcharenko I."/>
            <person name="Furey T.S."/>
            <person name="Miller W."/>
            <person name="Eichler E.E."/>
            <person name="Bork P."/>
            <person name="Suyama M."/>
            <person name="Torrents D."/>
            <person name="Waterston R.H."/>
            <person name="Wilson R.K."/>
        </authorList>
    </citation>
    <scope>NUCLEOTIDE SEQUENCE [LARGE SCALE GENOMIC DNA]</scope>
</reference>
<reference key="3">
    <citation type="submission" date="2011-10" db="EMBL/GenBank/DDBJ databases">
        <authorList>
            <person name="Mural R.J."/>
            <person name="Istrail S."/>
            <person name="Sutton G.G."/>
            <person name="Florea L."/>
            <person name="Halpern A.L."/>
            <person name="Mobarry C.M."/>
            <person name="Lippert R."/>
            <person name="Walenz B."/>
            <person name="Shatkay H."/>
            <person name="Dew I."/>
            <person name="Miller J.R."/>
            <person name="Flanigan M.J."/>
            <person name="Edwards N.J."/>
            <person name="Bolanos R."/>
            <person name="Fasulo D."/>
            <person name="Halldorsson B.V."/>
            <person name="Hannenhalli S."/>
            <person name="Turner R."/>
            <person name="Yooseph S."/>
            <person name="Lu F."/>
            <person name="Nusskern D.R."/>
            <person name="Shue B.C."/>
            <person name="Zheng X.H."/>
            <person name="Zhong F."/>
            <person name="Delcher A.L."/>
            <person name="Huson D.H."/>
            <person name="Kravitz S.A."/>
            <person name="Mouchard L."/>
            <person name="Reinert K."/>
            <person name="Remington K.A."/>
            <person name="Clark A.G."/>
            <person name="Waterman M.S."/>
            <person name="Eichler E.E."/>
            <person name="Adams M.D."/>
            <person name="Hunkapiller M.W."/>
            <person name="Myers E.W."/>
            <person name="Venter J.C."/>
        </authorList>
    </citation>
    <scope>NUCLEOTIDE SEQUENCE [LARGE SCALE GENOMIC DNA]</scope>
</reference>
<reference key="4">
    <citation type="journal article" date="2004" name="Genome Res.">
        <title>The status, quality, and expansion of the NIH full-length cDNA project: the Mammalian Gene Collection (MGC).</title>
        <authorList>
            <consortium name="The MGC Project Team"/>
        </authorList>
    </citation>
    <scope>NUCLEOTIDE SEQUENCE [LARGE SCALE MRNA] (ISOFORMS 1 AND 2)</scope>
    <source>
        <tissue>Kidney</tissue>
        <tissue>Skin</tissue>
    </source>
</reference>
<reference key="5">
    <citation type="journal article" date="2002" name="FEBS Lett.">
        <title>Melanophilin directly links Rab27a and myosin Va through its distinct coiled-coil regions.</title>
        <authorList>
            <person name="Nagashima K."/>
            <person name="Torii S."/>
            <person name="Yi Z."/>
            <person name="Igarashi M."/>
            <person name="Okamoto K."/>
            <person name="Takeuchi T."/>
            <person name="Izumi T."/>
        </authorList>
    </citation>
    <scope>MUTAGENESIS OF GLU-14; ARG-24 AND GLU-32</scope>
    <scope>INTERACTION WITH MYO5A AND RAB27A</scope>
    <scope>FUNCTION</scope>
</reference>
<reference key="6">
    <citation type="journal article" date="2003" name="J. Clin. Invest.">
        <title>Griscelli syndrome restricted to hypopigmentation results from a melanophilin defect (GS3) or a MYO5A F-exon deletion (GS1).</title>
        <authorList>
            <person name="Menasche G."/>
            <person name="Ho C.H."/>
            <person name="Sanal O."/>
            <person name="Feldmann J."/>
            <person name="Tezcan I."/>
            <person name="Ersoy F."/>
            <person name="Houdusse A."/>
            <person name="Fischer A."/>
            <person name="de Saint Basile G."/>
        </authorList>
    </citation>
    <scope>VARIANT GS3 TRP-35</scope>
</reference>
<protein>
    <recommendedName>
        <fullName>Melanophilin</fullName>
    </recommendedName>
    <alternativeName>
        <fullName>Exophilin-3</fullName>
    </alternativeName>
    <alternativeName>
        <fullName>Slp homolog lacking C2 domains a</fullName>
        <shortName>SlaC2-a</shortName>
    </alternativeName>
    <alternativeName>
        <fullName>Synaptotagmin-like protein 2a</fullName>
    </alternativeName>
</protein>
<keyword id="KW-0025">Alternative splicing</keyword>
<keyword id="KW-0175">Coiled coil</keyword>
<keyword id="KW-0963">Cytoplasm</keyword>
<keyword id="KW-0225">Disease variant</keyword>
<keyword id="KW-0479">Metal-binding</keyword>
<keyword id="KW-1267">Proteomics identification</keyword>
<keyword id="KW-1185">Reference proteome</keyword>
<keyword id="KW-0677">Repeat</keyword>
<keyword id="KW-0862">Zinc</keyword>
<keyword id="KW-0863">Zinc-finger</keyword>
<proteinExistence type="evidence at protein level"/>